<dbReference type="EC" id="2.1.1.107" evidence="1"/>
<dbReference type="EC" id="1.3.1.76" evidence="1"/>
<dbReference type="EC" id="4.99.1.4" evidence="1"/>
<dbReference type="EMBL" id="AE016827">
    <property type="protein sequence ID" value="AAU37861.1"/>
    <property type="status" value="ALT_INIT"/>
    <property type="molecule type" value="Genomic_DNA"/>
</dbReference>
<dbReference type="RefSeq" id="WP_041639772.1">
    <property type="nucleotide sequence ID" value="NC_006300.1"/>
</dbReference>
<dbReference type="SMR" id="Q65T49"/>
<dbReference type="STRING" id="221988.MS1254"/>
<dbReference type="KEGG" id="msu:MS1254"/>
<dbReference type="eggNOG" id="COG0007">
    <property type="taxonomic scope" value="Bacteria"/>
</dbReference>
<dbReference type="eggNOG" id="COG1648">
    <property type="taxonomic scope" value="Bacteria"/>
</dbReference>
<dbReference type="HOGENOM" id="CLU_011276_2_0_6"/>
<dbReference type="OrthoDB" id="9815856at2"/>
<dbReference type="UniPathway" id="UPA00148">
    <property type="reaction ID" value="UER00211"/>
</dbReference>
<dbReference type="UniPathway" id="UPA00148">
    <property type="reaction ID" value="UER00222"/>
</dbReference>
<dbReference type="UniPathway" id="UPA00262">
    <property type="reaction ID" value="UER00211"/>
</dbReference>
<dbReference type="UniPathway" id="UPA00262">
    <property type="reaction ID" value="UER00222"/>
</dbReference>
<dbReference type="UniPathway" id="UPA00262">
    <property type="reaction ID" value="UER00376"/>
</dbReference>
<dbReference type="Proteomes" id="UP000000607">
    <property type="component" value="Chromosome"/>
</dbReference>
<dbReference type="GO" id="GO:0051287">
    <property type="term" value="F:NAD binding"/>
    <property type="evidence" value="ECO:0007669"/>
    <property type="project" value="InterPro"/>
</dbReference>
<dbReference type="GO" id="GO:0043115">
    <property type="term" value="F:precorrin-2 dehydrogenase activity"/>
    <property type="evidence" value="ECO:0007669"/>
    <property type="project" value="UniProtKB-UniRule"/>
</dbReference>
<dbReference type="GO" id="GO:0051266">
    <property type="term" value="F:sirohydrochlorin ferrochelatase activity"/>
    <property type="evidence" value="ECO:0007669"/>
    <property type="project" value="UniProtKB-EC"/>
</dbReference>
<dbReference type="GO" id="GO:0004851">
    <property type="term" value="F:uroporphyrin-III C-methyltransferase activity"/>
    <property type="evidence" value="ECO:0007669"/>
    <property type="project" value="UniProtKB-UniRule"/>
</dbReference>
<dbReference type="GO" id="GO:0009236">
    <property type="term" value="P:cobalamin biosynthetic process"/>
    <property type="evidence" value="ECO:0007669"/>
    <property type="project" value="UniProtKB-UniRule"/>
</dbReference>
<dbReference type="GO" id="GO:0032259">
    <property type="term" value="P:methylation"/>
    <property type="evidence" value="ECO:0007669"/>
    <property type="project" value="UniProtKB-KW"/>
</dbReference>
<dbReference type="GO" id="GO:0019354">
    <property type="term" value="P:siroheme biosynthetic process"/>
    <property type="evidence" value="ECO:0007669"/>
    <property type="project" value="UniProtKB-UniRule"/>
</dbReference>
<dbReference type="CDD" id="cd11642">
    <property type="entry name" value="SUMT"/>
    <property type="match status" value="1"/>
</dbReference>
<dbReference type="FunFam" id="3.30.160.110:FF:000001">
    <property type="entry name" value="Siroheme synthase"/>
    <property type="match status" value="1"/>
</dbReference>
<dbReference type="FunFam" id="3.30.950.10:FF:000001">
    <property type="entry name" value="Siroheme synthase"/>
    <property type="match status" value="1"/>
</dbReference>
<dbReference type="FunFam" id="3.40.1010.10:FF:000001">
    <property type="entry name" value="Siroheme synthase"/>
    <property type="match status" value="1"/>
</dbReference>
<dbReference type="Gene3D" id="3.40.1010.10">
    <property type="entry name" value="Cobalt-precorrin-4 Transmethylase, Domain 1"/>
    <property type="match status" value="1"/>
</dbReference>
<dbReference type="Gene3D" id="3.30.950.10">
    <property type="entry name" value="Methyltransferase, Cobalt-precorrin-4 Transmethylase, Domain 2"/>
    <property type="match status" value="1"/>
</dbReference>
<dbReference type="Gene3D" id="3.40.50.720">
    <property type="entry name" value="NAD(P)-binding Rossmann-like Domain"/>
    <property type="match status" value="1"/>
</dbReference>
<dbReference type="Gene3D" id="1.10.8.210">
    <property type="entry name" value="Sirohaem synthase, dimerisation domain"/>
    <property type="match status" value="1"/>
</dbReference>
<dbReference type="Gene3D" id="3.30.160.110">
    <property type="entry name" value="Siroheme synthase, domain 2"/>
    <property type="match status" value="1"/>
</dbReference>
<dbReference type="HAMAP" id="MF_01646">
    <property type="entry name" value="Siroheme_synth"/>
    <property type="match status" value="1"/>
</dbReference>
<dbReference type="InterPro" id="IPR000878">
    <property type="entry name" value="4pyrrol_Mease"/>
</dbReference>
<dbReference type="InterPro" id="IPR035996">
    <property type="entry name" value="4pyrrol_Methylase_sf"/>
</dbReference>
<dbReference type="InterPro" id="IPR014777">
    <property type="entry name" value="4pyrrole_Mease_sub1"/>
</dbReference>
<dbReference type="InterPro" id="IPR014776">
    <property type="entry name" value="4pyrrole_Mease_sub2"/>
</dbReference>
<dbReference type="InterPro" id="IPR006366">
    <property type="entry name" value="CobA/CysG_C"/>
</dbReference>
<dbReference type="InterPro" id="IPR036291">
    <property type="entry name" value="NAD(P)-bd_dom_sf"/>
</dbReference>
<dbReference type="InterPro" id="IPR050161">
    <property type="entry name" value="Siro_Cobalamin_biosynth"/>
</dbReference>
<dbReference type="InterPro" id="IPR037115">
    <property type="entry name" value="Sirohaem_synt_dimer_dom_sf"/>
</dbReference>
<dbReference type="InterPro" id="IPR012409">
    <property type="entry name" value="Sirohaem_synth"/>
</dbReference>
<dbReference type="InterPro" id="IPR028281">
    <property type="entry name" value="Sirohaem_synthase_central"/>
</dbReference>
<dbReference type="InterPro" id="IPR019478">
    <property type="entry name" value="Sirohaem_synthase_dimer_dom"/>
</dbReference>
<dbReference type="InterPro" id="IPR006367">
    <property type="entry name" value="Sirohaem_synthase_N"/>
</dbReference>
<dbReference type="InterPro" id="IPR003043">
    <property type="entry name" value="Uropor_MeTrfase_CS"/>
</dbReference>
<dbReference type="NCBIfam" id="TIGR01469">
    <property type="entry name" value="cobA_cysG_Cterm"/>
    <property type="match status" value="1"/>
</dbReference>
<dbReference type="NCBIfam" id="TIGR01470">
    <property type="entry name" value="cysG_Nterm"/>
    <property type="match status" value="1"/>
</dbReference>
<dbReference type="NCBIfam" id="NF004790">
    <property type="entry name" value="PRK06136.1"/>
    <property type="match status" value="1"/>
</dbReference>
<dbReference type="NCBIfam" id="NF007922">
    <property type="entry name" value="PRK10637.1"/>
    <property type="match status" value="1"/>
</dbReference>
<dbReference type="PANTHER" id="PTHR45790:SF1">
    <property type="entry name" value="SIROHEME SYNTHASE"/>
    <property type="match status" value="1"/>
</dbReference>
<dbReference type="PANTHER" id="PTHR45790">
    <property type="entry name" value="SIROHEME SYNTHASE-RELATED"/>
    <property type="match status" value="1"/>
</dbReference>
<dbReference type="Pfam" id="PF10414">
    <property type="entry name" value="CysG_dimeriser"/>
    <property type="match status" value="1"/>
</dbReference>
<dbReference type="Pfam" id="PF13241">
    <property type="entry name" value="NAD_binding_7"/>
    <property type="match status" value="1"/>
</dbReference>
<dbReference type="Pfam" id="PF14824">
    <property type="entry name" value="Sirohm_synth_M"/>
    <property type="match status" value="1"/>
</dbReference>
<dbReference type="Pfam" id="PF00590">
    <property type="entry name" value="TP_methylase"/>
    <property type="match status" value="1"/>
</dbReference>
<dbReference type="PIRSF" id="PIRSF036426">
    <property type="entry name" value="Sirohaem_synth"/>
    <property type="match status" value="1"/>
</dbReference>
<dbReference type="SUPFAM" id="SSF51735">
    <property type="entry name" value="NAD(P)-binding Rossmann-fold domains"/>
    <property type="match status" value="1"/>
</dbReference>
<dbReference type="SUPFAM" id="SSF75615">
    <property type="entry name" value="Siroheme synthase middle domains-like"/>
    <property type="match status" value="1"/>
</dbReference>
<dbReference type="SUPFAM" id="SSF53790">
    <property type="entry name" value="Tetrapyrrole methylase"/>
    <property type="match status" value="1"/>
</dbReference>
<dbReference type="PROSITE" id="PS00839">
    <property type="entry name" value="SUMT_1"/>
    <property type="match status" value="1"/>
</dbReference>
<dbReference type="PROSITE" id="PS00840">
    <property type="entry name" value="SUMT_2"/>
    <property type="match status" value="1"/>
</dbReference>
<proteinExistence type="inferred from homology"/>
<protein>
    <recommendedName>
        <fullName evidence="1">Siroheme synthase</fullName>
    </recommendedName>
    <domain>
        <recommendedName>
            <fullName evidence="1">Uroporphyrinogen-III C-methyltransferase</fullName>
            <shortName evidence="1">Urogen III methylase</shortName>
            <ecNumber evidence="1">2.1.1.107</ecNumber>
        </recommendedName>
        <alternativeName>
            <fullName evidence="1">SUMT</fullName>
        </alternativeName>
        <alternativeName>
            <fullName evidence="1">Uroporphyrinogen III methylase</fullName>
            <shortName evidence="1">UROM</shortName>
        </alternativeName>
    </domain>
    <domain>
        <recommendedName>
            <fullName evidence="1">Precorrin-2 dehydrogenase</fullName>
            <ecNumber evidence="1">1.3.1.76</ecNumber>
        </recommendedName>
    </domain>
    <domain>
        <recommendedName>
            <fullName evidence="1">Sirohydrochlorin ferrochelatase</fullName>
            <ecNumber evidence="1">4.99.1.4</ecNumber>
        </recommendedName>
    </domain>
</protein>
<gene>
    <name evidence="1" type="primary">cysG</name>
    <name type="ordered locus">MS1254</name>
</gene>
<evidence type="ECO:0000255" key="1">
    <source>
        <dbReference type="HAMAP-Rule" id="MF_01646"/>
    </source>
</evidence>
<evidence type="ECO:0000305" key="2"/>
<sequence length="476" mass="52268">MNYFPVFADLNNRPVLVVGGGTIAARKVNLLLKANAEVRITAQKLNAELTALVEQDRIIWIAKEFHGEQIRNVFLVVAATDDEQLNEQVFQVAESRQKLVNVVDDQARCSFIFPSIIDRSPIQVAVSSGGAAPVLARLLREKLEALLPQHLGVMADISGKWRHKVKQQLKTITERRRFWESLFNGRFSRLLKNRQIEAAKKELELQLTKDYQGGSVSLVGAGPGDAGLLTLKGLQEIQQADVVLYDALVSAEILDLVRRDAELIFVGKRAQGRQVAQQETNQLLADLALQGKRVVRLKGGDPFVFGRGGEELEVLAQQGIPFSVVPGITAAIGATAYAGIPLTHRDYAQSAVFVTGHRKADASDIEWQTLARSNQTLVIYMGTLKAATIAQSLQQYGRAASTPVAVISQGTQETQHTQIGTLKNLAELAEKAPTPALIVVGEVVSLHEKLAWFGEDKFAQKRPHFTLDSLRIERVA</sequence>
<reference key="1">
    <citation type="journal article" date="2004" name="Nat. Biotechnol.">
        <title>The genome sequence of the capnophilic rumen bacterium Mannheimia succiniciproducens.</title>
        <authorList>
            <person name="Hong S.H."/>
            <person name="Kim J.S."/>
            <person name="Lee S.Y."/>
            <person name="In Y.H."/>
            <person name="Choi S.S."/>
            <person name="Rih J.-K."/>
            <person name="Kim C.H."/>
            <person name="Jeong H."/>
            <person name="Hur C.G."/>
            <person name="Kim J.J."/>
        </authorList>
    </citation>
    <scope>NUCLEOTIDE SEQUENCE [LARGE SCALE GENOMIC DNA]</scope>
    <source>
        <strain>KCTC 0769BP / MBEL55E</strain>
    </source>
</reference>
<comment type="function">
    <text evidence="1">Multifunctional enzyme that catalyzes the SAM-dependent methylations of uroporphyrinogen III at position C-2 and C-7 to form precorrin-2 via precorrin-1. Then it catalyzes the NAD-dependent ring dehydrogenation of precorrin-2 to yield sirohydrochlorin. Finally, it catalyzes the ferrochelation of sirohydrochlorin to yield siroheme.</text>
</comment>
<comment type="catalytic activity">
    <reaction evidence="1">
        <text>uroporphyrinogen III + 2 S-adenosyl-L-methionine = precorrin-2 + 2 S-adenosyl-L-homocysteine + H(+)</text>
        <dbReference type="Rhea" id="RHEA:32459"/>
        <dbReference type="ChEBI" id="CHEBI:15378"/>
        <dbReference type="ChEBI" id="CHEBI:57308"/>
        <dbReference type="ChEBI" id="CHEBI:57856"/>
        <dbReference type="ChEBI" id="CHEBI:58827"/>
        <dbReference type="ChEBI" id="CHEBI:59789"/>
        <dbReference type="EC" id="2.1.1.107"/>
    </reaction>
</comment>
<comment type="catalytic activity">
    <reaction evidence="1">
        <text>precorrin-2 + NAD(+) = sirohydrochlorin + NADH + 2 H(+)</text>
        <dbReference type="Rhea" id="RHEA:15613"/>
        <dbReference type="ChEBI" id="CHEBI:15378"/>
        <dbReference type="ChEBI" id="CHEBI:57540"/>
        <dbReference type="ChEBI" id="CHEBI:57945"/>
        <dbReference type="ChEBI" id="CHEBI:58351"/>
        <dbReference type="ChEBI" id="CHEBI:58827"/>
        <dbReference type="EC" id="1.3.1.76"/>
    </reaction>
</comment>
<comment type="catalytic activity">
    <reaction evidence="1">
        <text>siroheme + 2 H(+) = sirohydrochlorin + Fe(2+)</text>
        <dbReference type="Rhea" id="RHEA:24360"/>
        <dbReference type="ChEBI" id="CHEBI:15378"/>
        <dbReference type="ChEBI" id="CHEBI:29033"/>
        <dbReference type="ChEBI" id="CHEBI:58351"/>
        <dbReference type="ChEBI" id="CHEBI:60052"/>
        <dbReference type="EC" id="4.99.1.4"/>
    </reaction>
</comment>
<comment type="pathway">
    <text evidence="1">Cofactor biosynthesis; adenosylcobalamin biosynthesis; precorrin-2 from uroporphyrinogen III: step 1/1.</text>
</comment>
<comment type="pathway">
    <text evidence="1">Cofactor biosynthesis; adenosylcobalamin biosynthesis; sirohydrochlorin from precorrin-2: step 1/1.</text>
</comment>
<comment type="pathway">
    <text evidence="1">Porphyrin-containing compound metabolism; siroheme biosynthesis; precorrin-2 from uroporphyrinogen III: step 1/1.</text>
</comment>
<comment type="pathway">
    <text evidence="1">Porphyrin-containing compound metabolism; siroheme biosynthesis; siroheme from sirohydrochlorin: step 1/1.</text>
</comment>
<comment type="pathway">
    <text evidence="1">Porphyrin-containing compound metabolism; siroheme biosynthesis; sirohydrochlorin from precorrin-2: step 1/1.</text>
</comment>
<comment type="similarity">
    <text evidence="1">In the N-terminal section; belongs to the precorrin-2 dehydrogenase / sirohydrochlorin ferrochelatase family.</text>
</comment>
<comment type="similarity">
    <text evidence="1">In the C-terminal section; belongs to the precorrin methyltransferase family.</text>
</comment>
<comment type="sequence caution" evidence="2">
    <conflict type="erroneous initiation">
        <sequence resource="EMBL-CDS" id="AAU37861"/>
    </conflict>
    <text>Extended N-terminus.</text>
</comment>
<keyword id="KW-0169">Cobalamin biosynthesis</keyword>
<keyword id="KW-0456">Lyase</keyword>
<keyword id="KW-0489">Methyltransferase</keyword>
<keyword id="KW-0511">Multifunctional enzyme</keyword>
<keyword id="KW-0520">NAD</keyword>
<keyword id="KW-0560">Oxidoreductase</keyword>
<keyword id="KW-0597">Phosphoprotein</keyword>
<keyword id="KW-0627">Porphyrin biosynthesis</keyword>
<keyword id="KW-0949">S-adenosyl-L-methionine</keyword>
<keyword id="KW-0808">Transferase</keyword>
<feature type="chain" id="PRO_0000330520" description="Siroheme synthase">
    <location>
        <begin position="1"/>
        <end position="476"/>
    </location>
</feature>
<feature type="region of interest" description="Precorrin-2 dehydrogenase /sirohydrochlorin ferrochelatase" evidence="1">
    <location>
        <begin position="1"/>
        <end position="203"/>
    </location>
</feature>
<feature type="region of interest" description="Uroporphyrinogen-III C-methyltransferase" evidence="1">
    <location>
        <begin position="214"/>
        <end position="476"/>
    </location>
</feature>
<feature type="active site" description="Proton acceptor" evidence="1">
    <location>
        <position position="246"/>
    </location>
</feature>
<feature type="active site" description="Proton donor" evidence="1">
    <location>
        <position position="268"/>
    </location>
</feature>
<feature type="binding site" evidence="1">
    <location>
        <begin position="22"/>
        <end position="23"/>
    </location>
    <ligand>
        <name>NAD(+)</name>
        <dbReference type="ChEBI" id="CHEBI:57540"/>
    </ligand>
</feature>
<feature type="binding site" evidence="1">
    <location>
        <begin position="43"/>
        <end position="44"/>
    </location>
    <ligand>
        <name>NAD(+)</name>
        <dbReference type="ChEBI" id="CHEBI:57540"/>
    </ligand>
</feature>
<feature type="binding site" evidence="1">
    <location>
        <position position="223"/>
    </location>
    <ligand>
        <name>S-adenosyl-L-methionine</name>
        <dbReference type="ChEBI" id="CHEBI:59789"/>
    </ligand>
</feature>
<feature type="binding site" evidence="1">
    <location>
        <begin position="299"/>
        <end position="301"/>
    </location>
    <ligand>
        <name>S-adenosyl-L-methionine</name>
        <dbReference type="ChEBI" id="CHEBI:59789"/>
    </ligand>
</feature>
<feature type="binding site" evidence="1">
    <location>
        <position position="304"/>
    </location>
    <ligand>
        <name>S-adenosyl-L-methionine</name>
        <dbReference type="ChEBI" id="CHEBI:59789"/>
    </ligand>
</feature>
<feature type="binding site" evidence="1">
    <location>
        <begin position="329"/>
        <end position="330"/>
    </location>
    <ligand>
        <name>S-adenosyl-L-methionine</name>
        <dbReference type="ChEBI" id="CHEBI:59789"/>
    </ligand>
</feature>
<feature type="binding site" evidence="1">
    <location>
        <position position="381"/>
    </location>
    <ligand>
        <name>S-adenosyl-L-methionine</name>
        <dbReference type="ChEBI" id="CHEBI:59789"/>
    </ligand>
</feature>
<feature type="binding site" evidence="1">
    <location>
        <position position="410"/>
    </location>
    <ligand>
        <name>S-adenosyl-L-methionine</name>
        <dbReference type="ChEBI" id="CHEBI:59789"/>
    </ligand>
</feature>
<feature type="modified residue" description="Phosphoserine" evidence="1">
    <location>
        <position position="128"/>
    </location>
</feature>
<organism>
    <name type="scientific">Mannheimia succiniciproducens (strain KCTC 0769BP / MBEL55E)</name>
    <dbReference type="NCBI Taxonomy" id="221988"/>
    <lineage>
        <taxon>Bacteria</taxon>
        <taxon>Pseudomonadati</taxon>
        <taxon>Pseudomonadota</taxon>
        <taxon>Gammaproteobacteria</taxon>
        <taxon>Pasteurellales</taxon>
        <taxon>Pasteurellaceae</taxon>
        <taxon>Basfia</taxon>
    </lineage>
</organism>
<name>CYSG_MANSM</name>
<accession>Q65T49</accession>